<accession>A9MAG8</accession>
<proteinExistence type="inferred from homology"/>
<reference key="1">
    <citation type="submission" date="2007-10" db="EMBL/GenBank/DDBJ databases">
        <title>Brucella canis ATCC 23365 whole genome shotgun sequencing project.</title>
        <authorList>
            <person name="Setubal J.C."/>
            <person name="Bowns C."/>
            <person name="Boyle S."/>
            <person name="Crasta O.R."/>
            <person name="Czar M.J."/>
            <person name="Dharmanolla C."/>
            <person name="Gillespie J.J."/>
            <person name="Kenyon R.W."/>
            <person name="Lu J."/>
            <person name="Mane S."/>
            <person name="Mohapatra S."/>
            <person name="Nagrani S."/>
            <person name="Purkayastha A."/>
            <person name="Rajasimha H.K."/>
            <person name="Shallom J.M."/>
            <person name="Shallom S."/>
            <person name="Shukla M."/>
            <person name="Snyder E.E."/>
            <person name="Sobral B.W."/>
            <person name="Wattam A.R."/>
            <person name="Will R."/>
            <person name="Williams K."/>
            <person name="Yoo H."/>
            <person name="Bruce D."/>
            <person name="Detter C."/>
            <person name="Munk C."/>
            <person name="Brettin T.S."/>
        </authorList>
    </citation>
    <scope>NUCLEOTIDE SEQUENCE [LARGE SCALE GENOMIC DNA]</scope>
    <source>
        <strain>ATCC 23365 / NCTC 10854 / RM-666</strain>
    </source>
</reference>
<sequence length="154" mass="17408">MATFSQKPAEVVKKWVLIDAEDLVVGRLASLVANRLRGKHKATFTPHVDDGDNVIIINADKVVLTGKKYTDKKYYWHTGHPGGIKERTARQILEGRFPERVLEKAIERMIPRGPLGRRQMKNLRVYAGPNHQHEAQQPEVLDVAALNRKNKGNA</sequence>
<comment type="function">
    <text evidence="1">This protein is one of the early assembly proteins of the 50S ribosomal subunit, although it is not seen to bind rRNA by itself. It is important during the early stages of 50S assembly.</text>
</comment>
<comment type="subunit">
    <text evidence="1">Part of the 50S ribosomal subunit.</text>
</comment>
<comment type="similarity">
    <text evidence="1">Belongs to the universal ribosomal protein uL13 family.</text>
</comment>
<keyword id="KW-1185">Reference proteome</keyword>
<keyword id="KW-0687">Ribonucleoprotein</keyword>
<keyword id="KW-0689">Ribosomal protein</keyword>
<gene>
    <name evidence="1" type="primary">rplM</name>
    <name type="ordered locus">BCAN_A0804</name>
</gene>
<feature type="chain" id="PRO_1000087077" description="Large ribosomal subunit protein uL13">
    <location>
        <begin position="1"/>
        <end position="154"/>
    </location>
</feature>
<name>RL13_BRUC2</name>
<organism>
    <name type="scientific">Brucella canis (strain ATCC 23365 / NCTC 10854 / RM-666)</name>
    <dbReference type="NCBI Taxonomy" id="483179"/>
    <lineage>
        <taxon>Bacteria</taxon>
        <taxon>Pseudomonadati</taxon>
        <taxon>Pseudomonadota</taxon>
        <taxon>Alphaproteobacteria</taxon>
        <taxon>Hyphomicrobiales</taxon>
        <taxon>Brucellaceae</taxon>
        <taxon>Brucella/Ochrobactrum group</taxon>
        <taxon>Brucella</taxon>
    </lineage>
</organism>
<evidence type="ECO:0000255" key="1">
    <source>
        <dbReference type="HAMAP-Rule" id="MF_01366"/>
    </source>
</evidence>
<evidence type="ECO:0000305" key="2"/>
<dbReference type="EMBL" id="CP000872">
    <property type="protein sequence ID" value="ABX61871.1"/>
    <property type="molecule type" value="Genomic_DNA"/>
</dbReference>
<dbReference type="RefSeq" id="WP_004691903.1">
    <property type="nucleotide sequence ID" value="NC_010103.1"/>
</dbReference>
<dbReference type="SMR" id="A9MAG8"/>
<dbReference type="GeneID" id="55590504"/>
<dbReference type="KEGG" id="bcs:BCAN_A0804"/>
<dbReference type="HOGENOM" id="CLU_082184_2_0_5"/>
<dbReference type="PhylomeDB" id="A9MAG8"/>
<dbReference type="Proteomes" id="UP000001385">
    <property type="component" value="Chromosome I"/>
</dbReference>
<dbReference type="GO" id="GO:0022625">
    <property type="term" value="C:cytosolic large ribosomal subunit"/>
    <property type="evidence" value="ECO:0007669"/>
    <property type="project" value="TreeGrafter"/>
</dbReference>
<dbReference type="GO" id="GO:0003729">
    <property type="term" value="F:mRNA binding"/>
    <property type="evidence" value="ECO:0007669"/>
    <property type="project" value="TreeGrafter"/>
</dbReference>
<dbReference type="GO" id="GO:0003735">
    <property type="term" value="F:structural constituent of ribosome"/>
    <property type="evidence" value="ECO:0007669"/>
    <property type="project" value="InterPro"/>
</dbReference>
<dbReference type="GO" id="GO:0017148">
    <property type="term" value="P:negative regulation of translation"/>
    <property type="evidence" value="ECO:0007669"/>
    <property type="project" value="TreeGrafter"/>
</dbReference>
<dbReference type="GO" id="GO:0006412">
    <property type="term" value="P:translation"/>
    <property type="evidence" value="ECO:0007669"/>
    <property type="project" value="UniProtKB-UniRule"/>
</dbReference>
<dbReference type="CDD" id="cd00392">
    <property type="entry name" value="Ribosomal_L13"/>
    <property type="match status" value="1"/>
</dbReference>
<dbReference type="FunFam" id="3.90.1180.10:FF:000001">
    <property type="entry name" value="50S ribosomal protein L13"/>
    <property type="match status" value="1"/>
</dbReference>
<dbReference type="Gene3D" id="3.90.1180.10">
    <property type="entry name" value="Ribosomal protein L13"/>
    <property type="match status" value="1"/>
</dbReference>
<dbReference type="HAMAP" id="MF_01366">
    <property type="entry name" value="Ribosomal_uL13"/>
    <property type="match status" value="1"/>
</dbReference>
<dbReference type="InterPro" id="IPR005822">
    <property type="entry name" value="Ribosomal_uL13"/>
</dbReference>
<dbReference type="InterPro" id="IPR005823">
    <property type="entry name" value="Ribosomal_uL13_bac-type"/>
</dbReference>
<dbReference type="InterPro" id="IPR036899">
    <property type="entry name" value="Ribosomal_uL13_sf"/>
</dbReference>
<dbReference type="NCBIfam" id="TIGR01066">
    <property type="entry name" value="rplM_bact"/>
    <property type="match status" value="1"/>
</dbReference>
<dbReference type="PANTHER" id="PTHR11545:SF2">
    <property type="entry name" value="LARGE RIBOSOMAL SUBUNIT PROTEIN UL13M"/>
    <property type="match status" value="1"/>
</dbReference>
<dbReference type="PANTHER" id="PTHR11545">
    <property type="entry name" value="RIBOSOMAL PROTEIN L13"/>
    <property type="match status" value="1"/>
</dbReference>
<dbReference type="Pfam" id="PF00572">
    <property type="entry name" value="Ribosomal_L13"/>
    <property type="match status" value="1"/>
</dbReference>
<dbReference type="PIRSF" id="PIRSF002181">
    <property type="entry name" value="Ribosomal_L13"/>
    <property type="match status" value="1"/>
</dbReference>
<dbReference type="SUPFAM" id="SSF52161">
    <property type="entry name" value="Ribosomal protein L13"/>
    <property type="match status" value="1"/>
</dbReference>
<protein>
    <recommendedName>
        <fullName evidence="1">Large ribosomal subunit protein uL13</fullName>
    </recommendedName>
    <alternativeName>
        <fullName evidence="2">50S ribosomal protein L13</fullName>
    </alternativeName>
</protein>